<comment type="function">
    <text evidence="1 5 6 7">Hydrolyzes the phosphodiester bond of glycerophosphodiesters such as glycerophosphoinositol (GroPIns) and glycerophosphoethanolamine (GroPEth), to yield a glycerol phosphate and an alcohol (PubMed:18227059, PubMed:21801852, PubMed:25596343). Hydrolyzes glycerophospho-N-acylethanolamines to N-acylethanolamines in the brain and participates in bioactive N-acylethanolamine biosynthesis such as anandamide (an endocannabinoid), N-palmitoylethanolamine (an anti-inflammatory), and N-oleoylethanolamine (an anorexic) (PubMed:18227059). In addition, has a lysophospholipase D activity by hydrolyzing N-acyl-lysoplasmenylethanolamine (N-acyl-lysoPlsEt) to N-acylethanolamine (PubMed:21801852, PubMed:25596343). However lysophospholipase D activity is lower than glycerophosphodiester phosphodiesterase activity (PubMed:21801852, PubMed:25596343). Has little or no activity towards glycerophosphocholine (By similarity).</text>
</comment>
<comment type="catalytic activity">
    <reaction evidence="1">
        <text>sn-glycero-3-phospho-1D-myo-inositol + H2O = myo-inositol + sn-glycerol 3-phosphate + H(+)</text>
        <dbReference type="Rhea" id="RHEA:16501"/>
        <dbReference type="ChEBI" id="CHEBI:15377"/>
        <dbReference type="ChEBI" id="CHEBI:15378"/>
        <dbReference type="ChEBI" id="CHEBI:17268"/>
        <dbReference type="ChEBI" id="CHEBI:57597"/>
        <dbReference type="ChEBI" id="CHEBI:58444"/>
        <dbReference type="EC" id="3.1.4.44"/>
    </reaction>
    <physiologicalReaction direction="left-to-right" evidence="1">
        <dbReference type="Rhea" id="RHEA:16502"/>
    </physiologicalReaction>
</comment>
<comment type="catalytic activity">
    <reaction evidence="7">
        <text>1-O-(1Z-octadecenyl)-sn-glycero-3-phospho-(N-5Z,8Z,11Z,14Z-eicosatetraenoyl)-ethanolamine + H2O = 1-O-(1Z-octadecenyl)-sn-glycero-3-phosphate + N-(5Z,8Z,11Z,14Z-eicosatetraenoyl)-ethanolamine + H(+)</text>
        <dbReference type="Rhea" id="RHEA:53192"/>
        <dbReference type="ChEBI" id="CHEBI:2700"/>
        <dbReference type="ChEBI" id="CHEBI:15377"/>
        <dbReference type="ChEBI" id="CHEBI:15378"/>
        <dbReference type="ChEBI" id="CHEBI:137016"/>
        <dbReference type="ChEBI" id="CHEBI:137017"/>
    </reaction>
    <physiologicalReaction direction="left-to-right" evidence="7">
        <dbReference type="Rhea" id="RHEA:53193"/>
    </physiologicalReaction>
</comment>
<comment type="catalytic activity">
    <reaction evidence="7">
        <text>1-O-(1Z-octadecenyl)-sn-glycero-3-phospho-(N-9Z-octadecenoyl)-ethanolamine + H2O = 1-O-(1Z-octadecenyl)-sn-glycero-3-phosphate + N-(9Z-octadecenoyl) ethanolamine + H(+)</text>
        <dbReference type="Rhea" id="RHEA:53188"/>
        <dbReference type="ChEBI" id="CHEBI:15377"/>
        <dbReference type="ChEBI" id="CHEBI:15378"/>
        <dbReference type="ChEBI" id="CHEBI:71466"/>
        <dbReference type="ChEBI" id="CHEBI:137010"/>
        <dbReference type="ChEBI" id="CHEBI:137017"/>
    </reaction>
    <physiologicalReaction direction="left-to-right" evidence="7">
        <dbReference type="Rhea" id="RHEA:53189"/>
    </physiologicalReaction>
</comment>
<comment type="catalytic activity">
    <reaction evidence="6 7">
        <text>1-O-(1Z-octadecenyl)-sn-glycero-3-phospho-N-hexadecanoyl-ethanolamine + H2O = 1-O-(1Z-octadecenyl)-sn-glycero-3-phosphate + N-hexadecanoylethanolamine + H(+)</text>
        <dbReference type="Rhea" id="RHEA:53184"/>
        <dbReference type="ChEBI" id="CHEBI:15377"/>
        <dbReference type="ChEBI" id="CHEBI:15378"/>
        <dbReference type="ChEBI" id="CHEBI:71464"/>
        <dbReference type="ChEBI" id="CHEBI:137009"/>
        <dbReference type="ChEBI" id="CHEBI:137017"/>
    </reaction>
    <physiologicalReaction direction="left-to-right" evidence="7">
        <dbReference type="Rhea" id="RHEA:53185"/>
    </physiologicalReaction>
</comment>
<comment type="catalytic activity">
    <reaction evidence="5">
        <text>N-(4Z,7Z,10Z,13Z,16Z,19Z)-docosahexaenoyl-sn-glycero-3-phosphoethanolamine + H2O = N-(4Z,7Z,10Z,13Z,16Z,19Z)-docosahexaenoyl ethanolamine + sn-glycerol 3-phosphate + H(+)</text>
        <dbReference type="Rhea" id="RHEA:45444"/>
        <dbReference type="ChEBI" id="CHEBI:15377"/>
        <dbReference type="ChEBI" id="CHEBI:15378"/>
        <dbReference type="ChEBI" id="CHEBI:57597"/>
        <dbReference type="ChEBI" id="CHEBI:85250"/>
        <dbReference type="ChEBI" id="CHEBI:85252"/>
    </reaction>
    <physiologicalReaction direction="left-to-right" evidence="5">
        <dbReference type="Rhea" id="RHEA:45445"/>
    </physiologicalReaction>
</comment>
<comment type="catalytic activity">
    <reaction evidence="5">
        <text>N-eicosanoyl-sn-glycero-3-phosphoethanolamine + H2O = N-eicosanoyl ethanolamine + sn-glycerol 3-phosphate + H(+)</text>
        <dbReference type="Rhea" id="RHEA:45440"/>
        <dbReference type="ChEBI" id="CHEBI:15377"/>
        <dbReference type="ChEBI" id="CHEBI:15378"/>
        <dbReference type="ChEBI" id="CHEBI:57597"/>
        <dbReference type="ChEBI" id="CHEBI:85228"/>
        <dbReference type="ChEBI" id="CHEBI:85253"/>
    </reaction>
    <physiologicalReaction direction="left-to-right" evidence="5">
        <dbReference type="Rhea" id="RHEA:45441"/>
    </physiologicalReaction>
</comment>
<comment type="catalytic activity">
    <reaction evidence="5 6 7">
        <text>N-hexadecanoyl-sn-glycero-3-phosphoethanolamine + H2O = N-hexadecanoylethanolamine + sn-glycerol 3-phosphate + H(+)</text>
        <dbReference type="Rhea" id="RHEA:45436"/>
        <dbReference type="ChEBI" id="CHEBI:15377"/>
        <dbReference type="ChEBI" id="CHEBI:15378"/>
        <dbReference type="ChEBI" id="CHEBI:57597"/>
        <dbReference type="ChEBI" id="CHEBI:71464"/>
        <dbReference type="ChEBI" id="CHEBI:85226"/>
    </reaction>
    <physiologicalReaction direction="left-to-right" evidence="5">
        <dbReference type="Rhea" id="RHEA:45437"/>
    </physiologicalReaction>
</comment>
<comment type="catalytic activity">
    <reaction evidence="5">
        <text>N-(9Z-octadecenoyl)-sn-glycero-3-phosphoethanolamine + H2O = N-(9Z-octadecenoyl) ethanolamine + sn-glycerol 3-phosphate + H(+)</text>
        <dbReference type="Rhea" id="RHEA:45432"/>
        <dbReference type="ChEBI" id="CHEBI:15377"/>
        <dbReference type="ChEBI" id="CHEBI:15378"/>
        <dbReference type="ChEBI" id="CHEBI:57597"/>
        <dbReference type="ChEBI" id="CHEBI:71466"/>
        <dbReference type="ChEBI" id="CHEBI:85229"/>
    </reaction>
    <physiologicalReaction direction="left-to-right" evidence="5">
        <dbReference type="Rhea" id="RHEA:45433"/>
    </physiologicalReaction>
</comment>
<comment type="catalytic activity">
    <reaction evidence="5">
        <text>N-(5Z,8Z,11Z,14Z-eicosatetraenoyl)-sn-glycero-3-phosphoethanolamine + H2O = N-(5Z,8Z,11Z,14Z-eicosatetraenoyl)-ethanolamine + sn-glycerol 3-phosphate + H(+)</text>
        <dbReference type="Rhea" id="RHEA:45428"/>
        <dbReference type="ChEBI" id="CHEBI:2700"/>
        <dbReference type="ChEBI" id="CHEBI:15377"/>
        <dbReference type="ChEBI" id="CHEBI:15378"/>
        <dbReference type="ChEBI" id="CHEBI:57597"/>
        <dbReference type="ChEBI" id="CHEBI:85230"/>
    </reaction>
    <physiologicalReaction direction="left-to-right" evidence="5">
        <dbReference type="Rhea" id="RHEA:45429"/>
    </physiologicalReaction>
</comment>
<comment type="cofactor">
    <cofactor evidence="1">
        <name>Mg(2+)</name>
        <dbReference type="ChEBI" id="CHEBI:18420"/>
    </cofactor>
</comment>
<comment type="activity regulation">
    <text evidence="1 5 7">Inhibited by EDTA, calcium chloride, and zinc chloride (PubMed:18227059, PubMed:25596343). Enhanced by magnesium chloride (PubMed:18227059, PubMed:25596343). Glycerophosphodiester phosphodiesterase activity can be modulated by G-protein signaling pathways (By similarity).</text>
</comment>
<comment type="biophysicochemical properties">
    <phDependence>
        <text evidence="5 7">Optimum pH is 7.4.</text>
    </phDependence>
</comment>
<comment type="subunit">
    <text evidence="1 2">Interacts with PRAF2 (By similarity). Interacts with RGS16 (By similarity).</text>
</comment>
<comment type="subcellular location">
    <subcellularLocation>
        <location evidence="5">Cell membrane</location>
        <topology evidence="3">Multi-pass membrane protein</topology>
    </subcellularLocation>
    <subcellularLocation>
        <location evidence="1">Cytoplasmic vesicle membrane</location>
        <topology evidence="3">Multi-pass membrane protein</topology>
    </subcellularLocation>
    <text evidence="1">Perinuclear vesicles and cell membrane.</text>
</comment>
<comment type="tissue specificity">
    <text evidence="4 5">Widely expressed (PubMed:10760272). Highly expressed in the brain and spinal cord, followed by kidney, liver, and testis. In contrast, little or no expression is detected in the heart or spleen (PubMed:18227059).</text>
</comment>
<comment type="PTM">
    <text evidence="5">N-glycosylated.</text>
</comment>
<comment type="similarity">
    <text evidence="9">Belongs to the glycerophosphoryl diester phosphodiesterase family.</text>
</comment>
<dbReference type="EC" id="3.1.4.44" evidence="1"/>
<dbReference type="EC" id="3.1.4.-" evidence="6 7"/>
<dbReference type="EMBL" id="AF212860">
    <property type="protein sequence ID" value="AAF65232.1"/>
    <property type="molecule type" value="mRNA"/>
</dbReference>
<dbReference type="EMBL" id="AK005361">
    <property type="protein sequence ID" value="BAB23975.1"/>
    <property type="molecule type" value="mRNA"/>
</dbReference>
<dbReference type="EMBL" id="AK150807">
    <property type="protein sequence ID" value="BAE29870.1"/>
    <property type="molecule type" value="mRNA"/>
</dbReference>
<dbReference type="EMBL" id="BC003902">
    <property type="protein sequence ID" value="AAH03902.1"/>
    <property type="molecule type" value="mRNA"/>
</dbReference>
<dbReference type="CCDS" id="CCDS21774.1"/>
<dbReference type="RefSeq" id="NP_062526.1">
    <property type="nucleotide sequence ID" value="NM_019580.4"/>
</dbReference>
<dbReference type="SMR" id="Q9JL56"/>
<dbReference type="FunCoup" id="Q9JL56">
    <property type="interactions" value="647"/>
</dbReference>
<dbReference type="STRING" id="10090.ENSMUSP00000046371"/>
<dbReference type="SwissLipids" id="SLP:000001124"/>
<dbReference type="GlyConnect" id="2355">
    <property type="glycosylation" value="6 N-Linked glycans (2 sites)"/>
</dbReference>
<dbReference type="GlyCosmos" id="Q9JL56">
    <property type="glycosylation" value="2 sites, 6 glycans"/>
</dbReference>
<dbReference type="GlyGen" id="Q9JL56">
    <property type="glycosylation" value="2 sites, 7 N-linked glycans (2 sites)"/>
</dbReference>
<dbReference type="iPTMnet" id="Q9JL56"/>
<dbReference type="PhosphoSitePlus" id="Q9JL56"/>
<dbReference type="SwissPalm" id="Q9JL56"/>
<dbReference type="jPOST" id="Q9JL56"/>
<dbReference type="PaxDb" id="10090-ENSMUSP00000046371"/>
<dbReference type="PeptideAtlas" id="Q9JL56"/>
<dbReference type="ProteomicsDB" id="267427"/>
<dbReference type="Pumba" id="Q9JL56"/>
<dbReference type="Antibodypedia" id="25375">
    <property type="antibodies" value="167 antibodies from 25 providers"/>
</dbReference>
<dbReference type="DNASU" id="56209"/>
<dbReference type="Ensembl" id="ENSMUST00000038791.15">
    <property type="protein sequence ID" value="ENSMUSP00000046371.9"/>
    <property type="gene ID" value="ENSMUSG00000033917.16"/>
</dbReference>
<dbReference type="GeneID" id="56209"/>
<dbReference type="KEGG" id="mmu:56209"/>
<dbReference type="UCSC" id="uc009jki.1">
    <property type="organism name" value="mouse"/>
</dbReference>
<dbReference type="AGR" id="MGI:1891827"/>
<dbReference type="CTD" id="51573"/>
<dbReference type="MGI" id="MGI:1891827">
    <property type="gene designation" value="Gde1"/>
</dbReference>
<dbReference type="VEuPathDB" id="HostDB:ENSMUSG00000033917"/>
<dbReference type="eggNOG" id="KOG2258">
    <property type="taxonomic scope" value="Eukaryota"/>
</dbReference>
<dbReference type="GeneTree" id="ENSGT00510000047820"/>
<dbReference type="HOGENOM" id="CLU_030006_2_1_1"/>
<dbReference type="InParanoid" id="Q9JL56"/>
<dbReference type="OMA" id="KHHWMTL"/>
<dbReference type="OrthoDB" id="197419at2759"/>
<dbReference type="PhylomeDB" id="Q9JL56"/>
<dbReference type="TreeFam" id="TF313692"/>
<dbReference type="Reactome" id="R-MMU-6814848">
    <property type="pathway name" value="Glycerophospholipid catabolism"/>
</dbReference>
<dbReference type="BioGRID-ORCS" id="56209">
    <property type="hits" value="3 hits in 80 CRISPR screens"/>
</dbReference>
<dbReference type="ChiTaRS" id="Gde1">
    <property type="organism name" value="mouse"/>
</dbReference>
<dbReference type="PRO" id="PR:Q9JL56"/>
<dbReference type="Proteomes" id="UP000000589">
    <property type="component" value="Chromosome 7"/>
</dbReference>
<dbReference type="RNAct" id="Q9JL56">
    <property type="molecule type" value="protein"/>
</dbReference>
<dbReference type="Bgee" id="ENSMUSG00000033917">
    <property type="expression patterns" value="Expressed in epithelium of stomach and 266 other cell types or tissues"/>
</dbReference>
<dbReference type="ExpressionAtlas" id="Q9JL56">
    <property type="expression patterns" value="baseline and differential"/>
</dbReference>
<dbReference type="GO" id="GO:0030659">
    <property type="term" value="C:cytoplasmic vesicle membrane"/>
    <property type="evidence" value="ECO:0007669"/>
    <property type="project" value="UniProtKB-SubCell"/>
</dbReference>
<dbReference type="GO" id="GO:0016020">
    <property type="term" value="C:membrane"/>
    <property type="evidence" value="ECO:0000314"/>
    <property type="project" value="MGI"/>
</dbReference>
<dbReference type="GO" id="GO:0005886">
    <property type="term" value="C:plasma membrane"/>
    <property type="evidence" value="ECO:0000315"/>
    <property type="project" value="UniProtKB"/>
</dbReference>
<dbReference type="GO" id="GO:0008889">
    <property type="term" value="F:glycerophosphodiester phosphodiesterase activity"/>
    <property type="evidence" value="ECO:0000315"/>
    <property type="project" value="UniProtKB"/>
</dbReference>
<dbReference type="GO" id="GO:0047395">
    <property type="term" value="F:glycerophosphoinositol glycerophosphodiesterase activity"/>
    <property type="evidence" value="ECO:0000314"/>
    <property type="project" value="MGI"/>
</dbReference>
<dbReference type="GO" id="GO:0004622">
    <property type="term" value="F:lysophospholipase activity"/>
    <property type="evidence" value="ECO:0000314"/>
    <property type="project" value="MGI"/>
</dbReference>
<dbReference type="GO" id="GO:0046872">
    <property type="term" value="F:metal ion binding"/>
    <property type="evidence" value="ECO:0007669"/>
    <property type="project" value="UniProtKB-KW"/>
</dbReference>
<dbReference type="GO" id="GO:0008081">
    <property type="term" value="F:phosphoric diester hydrolase activity"/>
    <property type="evidence" value="ECO:0000314"/>
    <property type="project" value="MGI"/>
</dbReference>
<dbReference type="GO" id="GO:0006580">
    <property type="term" value="P:ethanolamine metabolic process"/>
    <property type="evidence" value="ECO:0000315"/>
    <property type="project" value="UniProtKB"/>
</dbReference>
<dbReference type="GO" id="GO:0007186">
    <property type="term" value="P:G protein-coupled receptor signaling pathway"/>
    <property type="evidence" value="ECO:0000266"/>
    <property type="project" value="MGI"/>
</dbReference>
<dbReference type="GO" id="GO:0070291">
    <property type="term" value="P:N-acylethanolamine metabolic process"/>
    <property type="evidence" value="ECO:0000314"/>
    <property type="project" value="MGI"/>
</dbReference>
<dbReference type="GO" id="GO:0006644">
    <property type="term" value="P:phospholipid metabolic process"/>
    <property type="evidence" value="ECO:0000314"/>
    <property type="project" value="MGI"/>
</dbReference>
<dbReference type="CDD" id="cd08573">
    <property type="entry name" value="GDPD_GDE1"/>
    <property type="match status" value="1"/>
</dbReference>
<dbReference type="Gene3D" id="3.20.20.190">
    <property type="entry name" value="Phosphatidylinositol (PI) phosphodiesterase"/>
    <property type="match status" value="1"/>
</dbReference>
<dbReference type="InterPro" id="IPR030395">
    <property type="entry name" value="GP_PDE_dom"/>
</dbReference>
<dbReference type="InterPro" id="IPR017946">
    <property type="entry name" value="PLC-like_Pdiesterase_TIM-brl"/>
</dbReference>
<dbReference type="PANTHER" id="PTHR46320">
    <property type="entry name" value="GLYCEROPHOSPHODIESTER PHOSPHODIESTERASE 1"/>
    <property type="match status" value="1"/>
</dbReference>
<dbReference type="PANTHER" id="PTHR46320:SF1">
    <property type="entry name" value="GLYCEROPHOSPHODIESTER PHOSPHODIESTERASE 1"/>
    <property type="match status" value="1"/>
</dbReference>
<dbReference type="Pfam" id="PF03009">
    <property type="entry name" value="GDPD"/>
    <property type="match status" value="1"/>
</dbReference>
<dbReference type="SUPFAM" id="SSF51695">
    <property type="entry name" value="PLC-like phosphodiesterases"/>
    <property type="match status" value="1"/>
</dbReference>
<dbReference type="PROSITE" id="PS51704">
    <property type="entry name" value="GP_PDE"/>
    <property type="match status" value="1"/>
</dbReference>
<evidence type="ECO:0000250" key="1">
    <source>
        <dbReference type="UniProtKB" id="Q9JL55"/>
    </source>
</evidence>
<evidence type="ECO:0000250" key="2">
    <source>
        <dbReference type="UniProtKB" id="Q9NZC3"/>
    </source>
</evidence>
<evidence type="ECO:0000255" key="3"/>
<evidence type="ECO:0000269" key="4">
    <source>
    </source>
</evidence>
<evidence type="ECO:0000269" key="5">
    <source>
    </source>
</evidence>
<evidence type="ECO:0000269" key="6">
    <source>
    </source>
</evidence>
<evidence type="ECO:0000269" key="7">
    <source>
    </source>
</evidence>
<evidence type="ECO:0000303" key="8">
    <source>
    </source>
</evidence>
<evidence type="ECO:0000305" key="9"/>
<evidence type="ECO:0000312" key="10">
    <source>
        <dbReference type="MGI" id="MGI:1891827"/>
    </source>
</evidence>
<reference key="1">
    <citation type="journal article" date="2000" name="Proc. Natl. Acad. Sci. U.S.A.">
        <title>MIR16, a putative membrane glycerophosphodiester phosphodiesterase, interacts with RGS16.</title>
        <authorList>
            <person name="Zheng B."/>
            <person name="Chen D."/>
            <person name="Farquhar M.G."/>
        </authorList>
    </citation>
    <scope>NUCLEOTIDE SEQUENCE [MRNA]</scope>
    <scope>TISSUE SPECIFICITY</scope>
</reference>
<reference key="2">
    <citation type="journal article" date="2005" name="Science">
        <title>The transcriptional landscape of the mammalian genome.</title>
        <authorList>
            <person name="Carninci P."/>
            <person name="Kasukawa T."/>
            <person name="Katayama S."/>
            <person name="Gough J."/>
            <person name="Frith M.C."/>
            <person name="Maeda N."/>
            <person name="Oyama R."/>
            <person name="Ravasi T."/>
            <person name="Lenhard B."/>
            <person name="Wells C."/>
            <person name="Kodzius R."/>
            <person name="Shimokawa K."/>
            <person name="Bajic V.B."/>
            <person name="Brenner S.E."/>
            <person name="Batalov S."/>
            <person name="Forrest A.R."/>
            <person name="Zavolan M."/>
            <person name="Davis M.J."/>
            <person name="Wilming L.G."/>
            <person name="Aidinis V."/>
            <person name="Allen J.E."/>
            <person name="Ambesi-Impiombato A."/>
            <person name="Apweiler R."/>
            <person name="Aturaliya R.N."/>
            <person name="Bailey T.L."/>
            <person name="Bansal M."/>
            <person name="Baxter L."/>
            <person name="Beisel K.W."/>
            <person name="Bersano T."/>
            <person name="Bono H."/>
            <person name="Chalk A.M."/>
            <person name="Chiu K.P."/>
            <person name="Choudhary V."/>
            <person name="Christoffels A."/>
            <person name="Clutterbuck D.R."/>
            <person name="Crowe M.L."/>
            <person name="Dalla E."/>
            <person name="Dalrymple B.P."/>
            <person name="de Bono B."/>
            <person name="Della Gatta G."/>
            <person name="di Bernardo D."/>
            <person name="Down T."/>
            <person name="Engstrom P."/>
            <person name="Fagiolini M."/>
            <person name="Faulkner G."/>
            <person name="Fletcher C.F."/>
            <person name="Fukushima T."/>
            <person name="Furuno M."/>
            <person name="Futaki S."/>
            <person name="Gariboldi M."/>
            <person name="Georgii-Hemming P."/>
            <person name="Gingeras T.R."/>
            <person name="Gojobori T."/>
            <person name="Green R.E."/>
            <person name="Gustincich S."/>
            <person name="Harbers M."/>
            <person name="Hayashi Y."/>
            <person name="Hensch T.K."/>
            <person name="Hirokawa N."/>
            <person name="Hill D."/>
            <person name="Huminiecki L."/>
            <person name="Iacono M."/>
            <person name="Ikeo K."/>
            <person name="Iwama A."/>
            <person name="Ishikawa T."/>
            <person name="Jakt M."/>
            <person name="Kanapin A."/>
            <person name="Katoh M."/>
            <person name="Kawasawa Y."/>
            <person name="Kelso J."/>
            <person name="Kitamura H."/>
            <person name="Kitano H."/>
            <person name="Kollias G."/>
            <person name="Krishnan S.P."/>
            <person name="Kruger A."/>
            <person name="Kummerfeld S.K."/>
            <person name="Kurochkin I.V."/>
            <person name="Lareau L.F."/>
            <person name="Lazarevic D."/>
            <person name="Lipovich L."/>
            <person name="Liu J."/>
            <person name="Liuni S."/>
            <person name="McWilliam S."/>
            <person name="Madan Babu M."/>
            <person name="Madera M."/>
            <person name="Marchionni L."/>
            <person name="Matsuda H."/>
            <person name="Matsuzawa S."/>
            <person name="Miki H."/>
            <person name="Mignone F."/>
            <person name="Miyake S."/>
            <person name="Morris K."/>
            <person name="Mottagui-Tabar S."/>
            <person name="Mulder N."/>
            <person name="Nakano N."/>
            <person name="Nakauchi H."/>
            <person name="Ng P."/>
            <person name="Nilsson R."/>
            <person name="Nishiguchi S."/>
            <person name="Nishikawa S."/>
            <person name="Nori F."/>
            <person name="Ohara O."/>
            <person name="Okazaki Y."/>
            <person name="Orlando V."/>
            <person name="Pang K.C."/>
            <person name="Pavan W.J."/>
            <person name="Pavesi G."/>
            <person name="Pesole G."/>
            <person name="Petrovsky N."/>
            <person name="Piazza S."/>
            <person name="Reed J."/>
            <person name="Reid J.F."/>
            <person name="Ring B.Z."/>
            <person name="Ringwald M."/>
            <person name="Rost B."/>
            <person name="Ruan Y."/>
            <person name="Salzberg S.L."/>
            <person name="Sandelin A."/>
            <person name="Schneider C."/>
            <person name="Schoenbach C."/>
            <person name="Sekiguchi K."/>
            <person name="Semple C.A."/>
            <person name="Seno S."/>
            <person name="Sessa L."/>
            <person name="Sheng Y."/>
            <person name="Shibata Y."/>
            <person name="Shimada H."/>
            <person name="Shimada K."/>
            <person name="Silva D."/>
            <person name="Sinclair B."/>
            <person name="Sperling S."/>
            <person name="Stupka E."/>
            <person name="Sugiura K."/>
            <person name="Sultana R."/>
            <person name="Takenaka Y."/>
            <person name="Taki K."/>
            <person name="Tammoja K."/>
            <person name="Tan S.L."/>
            <person name="Tang S."/>
            <person name="Taylor M.S."/>
            <person name="Tegner J."/>
            <person name="Teichmann S.A."/>
            <person name="Ueda H.R."/>
            <person name="van Nimwegen E."/>
            <person name="Verardo R."/>
            <person name="Wei C.L."/>
            <person name="Yagi K."/>
            <person name="Yamanishi H."/>
            <person name="Zabarovsky E."/>
            <person name="Zhu S."/>
            <person name="Zimmer A."/>
            <person name="Hide W."/>
            <person name="Bult C."/>
            <person name="Grimmond S.M."/>
            <person name="Teasdale R.D."/>
            <person name="Liu E.T."/>
            <person name="Brusic V."/>
            <person name="Quackenbush J."/>
            <person name="Wahlestedt C."/>
            <person name="Mattick J.S."/>
            <person name="Hume D.A."/>
            <person name="Kai C."/>
            <person name="Sasaki D."/>
            <person name="Tomaru Y."/>
            <person name="Fukuda S."/>
            <person name="Kanamori-Katayama M."/>
            <person name="Suzuki M."/>
            <person name="Aoki J."/>
            <person name="Arakawa T."/>
            <person name="Iida J."/>
            <person name="Imamura K."/>
            <person name="Itoh M."/>
            <person name="Kato T."/>
            <person name="Kawaji H."/>
            <person name="Kawagashira N."/>
            <person name="Kawashima T."/>
            <person name="Kojima M."/>
            <person name="Kondo S."/>
            <person name="Konno H."/>
            <person name="Nakano K."/>
            <person name="Ninomiya N."/>
            <person name="Nishio T."/>
            <person name="Okada M."/>
            <person name="Plessy C."/>
            <person name="Shibata K."/>
            <person name="Shiraki T."/>
            <person name="Suzuki S."/>
            <person name="Tagami M."/>
            <person name="Waki K."/>
            <person name="Watahiki A."/>
            <person name="Okamura-Oho Y."/>
            <person name="Suzuki H."/>
            <person name="Kawai J."/>
            <person name="Hayashizaki Y."/>
        </authorList>
    </citation>
    <scope>NUCLEOTIDE SEQUENCE [LARGE SCALE MRNA]</scope>
    <source>
        <strain>C57BL/6J</strain>
        <tissue>Bone marrow</tissue>
        <tissue>Cerebellum</tissue>
    </source>
</reference>
<reference key="3">
    <citation type="journal article" date="2004" name="Genome Res.">
        <title>The status, quality, and expansion of the NIH full-length cDNA project: the Mammalian Gene Collection (MGC).</title>
        <authorList>
            <consortium name="The MGC Project Team"/>
        </authorList>
    </citation>
    <scope>NUCLEOTIDE SEQUENCE [LARGE SCALE MRNA]</scope>
    <source>
        <strain>FVB/N</strain>
        <tissue>Mammary tumor</tissue>
    </source>
</reference>
<reference key="4">
    <citation type="journal article" date="2008" name="J. Biol. Chem.">
        <title>Anandamide biosynthesis catalyzed by the phosphodiesterase GDE1 and detection of glycerophospho-N-acyl ethanolamine precursors in mouse brain.</title>
        <authorList>
            <person name="Simon G.M."/>
            <person name="Cravatt B.F."/>
        </authorList>
    </citation>
    <scope>CATALYTIC ACTIVITY</scope>
    <scope>FUNCTION</scope>
    <scope>ACTIVITY REGULATION</scope>
    <scope>GLYCOSYLATION</scope>
    <scope>SUBCELLULAR LOCATION</scope>
    <scope>BIOPHYSICOCHEMICAL PROPERTIES</scope>
    <scope>TISSUE SPECIFICITY</scope>
</reference>
<reference key="5">
    <citation type="journal article" date="2010" name="Cell">
        <title>A tissue-specific atlas of mouse protein phosphorylation and expression.</title>
        <authorList>
            <person name="Huttlin E.L."/>
            <person name="Jedrychowski M.P."/>
            <person name="Elias J.E."/>
            <person name="Goswami T."/>
            <person name="Rad R."/>
            <person name="Beausoleil S.A."/>
            <person name="Villen J."/>
            <person name="Haas W."/>
            <person name="Sowa M.E."/>
            <person name="Gygi S.P."/>
        </authorList>
    </citation>
    <scope>IDENTIFICATION BY MASS SPECTROMETRY [LARGE SCALE ANALYSIS]</scope>
    <source>
        <tissue>Brain</tissue>
        <tissue>Kidney</tissue>
        <tissue>Lung</tissue>
    </source>
</reference>
<reference key="6">
    <citation type="journal article" date="2011" name="Biochim. Biophys. Acta">
        <title>Enzymatic formation of N-acylethanolamines from N-acylethanolamine plasmalogen through N-acylphosphatidylethanolamine-hydrolyzing phospholipase D-dependent and -independent pathways.</title>
        <authorList>
            <person name="Tsuboi K."/>
            <person name="Okamoto Y."/>
            <person name="Ikematsu N."/>
            <person name="Inoue M."/>
            <person name="Shimizu Y."/>
            <person name="Uyama T."/>
            <person name="Wang J."/>
            <person name="Deutsch D.G."/>
            <person name="Burns M.P."/>
            <person name="Ulloa N.M."/>
            <person name="Tokumura A."/>
            <person name="Ueda N."/>
        </authorList>
    </citation>
    <scope>CATALYTIC ACTIVITY</scope>
    <scope>FUNCTION</scope>
</reference>
<reference key="7">
    <citation type="journal article" date="2015" name="Biochim. Biophys. Acta">
        <title>Glycerophosphodiesterase GDE4 as a novel lysophospholipase D: a possible involvement in bioactive N-acylethanolamine biosynthesis.</title>
        <authorList>
            <person name="Tsuboi K."/>
            <person name="Okamoto Y."/>
            <person name="Rahman I.A."/>
            <person name="Uyama T."/>
            <person name="Inoue T."/>
            <person name="Tokumura A."/>
            <person name="Ueda N."/>
        </authorList>
    </citation>
    <scope>TISSUE SPECIFICITY</scope>
    <scope>CATALYTIC ACTIVITY</scope>
    <scope>FUNCTION</scope>
    <scope>BIOPHYSICOCHEMICAL PROPERTIES</scope>
    <scope>ACTIVITY REGULATION</scope>
</reference>
<organism>
    <name type="scientific">Mus musculus</name>
    <name type="common">Mouse</name>
    <dbReference type="NCBI Taxonomy" id="10090"/>
    <lineage>
        <taxon>Eukaryota</taxon>
        <taxon>Metazoa</taxon>
        <taxon>Chordata</taxon>
        <taxon>Craniata</taxon>
        <taxon>Vertebrata</taxon>
        <taxon>Euteleostomi</taxon>
        <taxon>Mammalia</taxon>
        <taxon>Eutheria</taxon>
        <taxon>Euarchontoglires</taxon>
        <taxon>Glires</taxon>
        <taxon>Rodentia</taxon>
        <taxon>Myomorpha</taxon>
        <taxon>Muroidea</taxon>
        <taxon>Muridae</taxon>
        <taxon>Murinae</taxon>
        <taxon>Mus</taxon>
        <taxon>Mus</taxon>
    </lineage>
</organism>
<feature type="chain" id="PRO_0000251945" description="Glycerophosphodiester phosphodiesterase 1">
    <location>
        <begin position="1"/>
        <end position="331"/>
    </location>
</feature>
<feature type="topological domain" description="Cytoplasmic" evidence="3">
    <location>
        <begin position="1"/>
        <end position="3"/>
    </location>
</feature>
<feature type="transmembrane region" description="Helical" evidence="3">
    <location>
        <begin position="4"/>
        <end position="24"/>
    </location>
</feature>
<feature type="topological domain" description="Lumenal" evidence="3">
    <location>
        <begin position="25"/>
        <end position="248"/>
    </location>
</feature>
<feature type="transmembrane region" description="Helical" evidence="3">
    <location>
        <begin position="249"/>
        <end position="269"/>
    </location>
</feature>
<feature type="topological domain" description="Cytoplasmic" evidence="3">
    <location>
        <begin position="270"/>
        <end position="331"/>
    </location>
</feature>
<feature type="domain" description="GP-PDE">
    <location>
        <begin position="65"/>
        <end position="331"/>
    </location>
</feature>
<feature type="binding site" evidence="3">
    <location>
        <position position="97"/>
    </location>
    <ligand>
        <name>Mg(2+)</name>
        <dbReference type="ChEBI" id="CHEBI:18420"/>
    </ligand>
</feature>
<feature type="binding site" evidence="3">
    <location>
        <position position="99"/>
    </location>
    <ligand>
        <name>Mg(2+)</name>
        <dbReference type="ChEBI" id="CHEBI:18420"/>
    </ligand>
</feature>
<feature type="binding site" evidence="3">
    <location>
        <position position="174"/>
    </location>
    <ligand>
        <name>Mg(2+)</name>
        <dbReference type="ChEBI" id="CHEBI:18420"/>
    </ligand>
</feature>
<feature type="glycosylation site" description="N-linked (GlcNAc...) asparagine" evidence="3">
    <location>
        <position position="168"/>
    </location>
</feature>
<feature type="sequence conflict" description="In Ref. 2; BAE29870." evidence="9" ref="2">
    <original>F</original>
    <variation>L</variation>
    <location>
        <position position="102"/>
    </location>
</feature>
<proteinExistence type="evidence at protein level"/>
<sequence length="331" mass="37629">MWLWEDQGGLLGPFSFVLVLLLVVTRSPFNACVLTGSLYILLRFFSFEPVPSRRALQVLKPRDRVSAIAHRGGSHDAPENTLAAIRQAAKNGATGVELDIEFTSDGVPVLMHDNTVDRTTDGSGRLCDLTFEQVRKLNPAANHRLRNEFPDERIPTLKEAVTECLRHNLTIFFDVKGHADMASAALKNIYTEFPQLYNNSMVCSFLPEVIYKMRQTDQKVITALTHRPWSLSHTGDGKPRYSVFWKQSVFVVLDILLDWSMHNVLWYLCGISAFLMQKDFVSPDYLKKWSAKGIQVVSWTVNTFDEKNYYESHLGSSYITDSMLEDCAPHF</sequence>
<gene>
    <name evidence="10" type="primary">Gde1</name>
    <name evidence="8" type="synonym">Mir16</name>
</gene>
<keyword id="KW-1003">Cell membrane</keyword>
<keyword id="KW-0968">Cytoplasmic vesicle</keyword>
<keyword id="KW-0325">Glycoprotein</keyword>
<keyword id="KW-0378">Hydrolase</keyword>
<keyword id="KW-0443">Lipid metabolism</keyword>
<keyword id="KW-0460">Magnesium</keyword>
<keyword id="KW-0472">Membrane</keyword>
<keyword id="KW-0479">Metal-binding</keyword>
<keyword id="KW-1185">Reference proteome</keyword>
<keyword id="KW-0812">Transmembrane</keyword>
<keyword id="KW-1133">Transmembrane helix</keyword>
<name>GDE1_MOUSE</name>
<accession>Q9JL56</accession>
<accession>Q3UBU4</accession>
<protein>
    <recommendedName>
        <fullName evidence="9">Glycerophosphodiester phosphodiesterase 1</fullName>
    </recommendedName>
    <alternativeName>
        <fullName evidence="9">Glycerophosphoinositol glycerophosphodiesterase GDE1</fullName>
        <ecNumber evidence="1">3.1.4.44</ecNumber>
    </alternativeName>
    <alternativeName>
        <fullName evidence="9">Lysophospholipase D GDE1</fullName>
        <ecNumber evidence="6 7">3.1.4.-</ecNumber>
    </alternativeName>
    <alternativeName>
        <fullName evidence="8">Membrane-interacting protein of RGS16</fullName>
    </alternativeName>
</protein>